<gene>
    <name type="primary">lip1</name>
    <name type="ordered locus">SAR2753</name>
</gene>
<organism>
    <name type="scientific">Staphylococcus aureus (strain MRSA252)</name>
    <dbReference type="NCBI Taxonomy" id="282458"/>
    <lineage>
        <taxon>Bacteria</taxon>
        <taxon>Bacillati</taxon>
        <taxon>Bacillota</taxon>
        <taxon>Bacilli</taxon>
        <taxon>Bacillales</taxon>
        <taxon>Staphylococcaceae</taxon>
        <taxon>Staphylococcus</taxon>
    </lineage>
</organism>
<sequence length="680" mass="76601">MKSQNKYSIRKFSVGASSILIATLLFLSGGQAQAAEKQVNMGNSQEDTVTAQSIGDQQTRENANYQRENGVDEQQHTENLTKNLHNDKTISEENHRKTDDLNKDQLKDDKKSSLNNKNIQRDTTKNNNANPRDVNQGLEQAINDGKQSKVASQQQSKEADNSQDLNANNNLPSQSRTKVSPSLNKSDQTSQREIVNETEIEKVQPQQKNQANDKITDHNFNNEQEVKPQKDEKTLSVSDLKNNQKSPVEPTKDNDKKNGLNLLKSSAVATLPNKGTKELTAKAKGDQTNKVAKQGQYKNQDPIVLVHGFNGFTDDINPSVLAHYWGGNKMNIRQDLEENGYKAYEASISAFGSNYDRAVELYYYIKGGRVDYGAAHAAKYGHERYGKTYEGIYKDWKPGQKVHLVGHSMGGQTIRQLEELLRNGSREEIEYQKKHSGEISPLFKGNNDNMISSITTLGTPHNGTHASDLAGNEALVRQIVFDIGKMFGNKNSRVDFGLAQWGLKQKPNESYIDYVKRVKQSNLWKSKDNGFYDLTREGATDLNRKTSLNPNIVYKTYTGEATHKALNSDRQKADLNMFFPFVITGNLIGKATEKEWRENDGLVSVISSQHPFNQAYTNATDKIQKGIWQVTPTKHDWDHVDFVGQDSSDTVRTREELQDFWHHLADDLVKTEKVTDTKQA</sequence>
<evidence type="ECO:0000250" key="1"/>
<evidence type="ECO:0000255" key="2"/>
<evidence type="ECO:0000255" key="3">
    <source>
        <dbReference type="PROSITE-ProRule" id="PRU10037"/>
    </source>
</evidence>
<evidence type="ECO:0000256" key="4">
    <source>
        <dbReference type="SAM" id="MobiDB-lite"/>
    </source>
</evidence>
<evidence type="ECO:0000305" key="5"/>
<reference key="1">
    <citation type="journal article" date="2004" name="Proc. Natl. Acad. Sci. U.S.A.">
        <title>Complete genomes of two clinical Staphylococcus aureus strains: evidence for the rapid evolution of virulence and drug resistance.</title>
        <authorList>
            <person name="Holden M.T.G."/>
            <person name="Feil E.J."/>
            <person name="Lindsay J.A."/>
            <person name="Peacock S.J."/>
            <person name="Day N.P.J."/>
            <person name="Enright M.C."/>
            <person name="Foster T.J."/>
            <person name="Moore C.E."/>
            <person name="Hurst L."/>
            <person name="Atkin R."/>
            <person name="Barron A."/>
            <person name="Bason N."/>
            <person name="Bentley S.D."/>
            <person name="Chillingworth C."/>
            <person name="Chillingworth T."/>
            <person name="Churcher C."/>
            <person name="Clark L."/>
            <person name="Corton C."/>
            <person name="Cronin A."/>
            <person name="Doggett J."/>
            <person name="Dowd L."/>
            <person name="Feltwell T."/>
            <person name="Hance Z."/>
            <person name="Harris B."/>
            <person name="Hauser H."/>
            <person name="Holroyd S."/>
            <person name="Jagels K."/>
            <person name="James K.D."/>
            <person name="Lennard N."/>
            <person name="Line A."/>
            <person name="Mayes R."/>
            <person name="Moule S."/>
            <person name="Mungall K."/>
            <person name="Ormond D."/>
            <person name="Quail M.A."/>
            <person name="Rabbinowitsch E."/>
            <person name="Rutherford K.M."/>
            <person name="Sanders M."/>
            <person name="Sharp S."/>
            <person name="Simmonds M."/>
            <person name="Stevens K."/>
            <person name="Whitehead S."/>
            <person name="Barrell B.G."/>
            <person name="Spratt B.G."/>
            <person name="Parkhill J."/>
        </authorList>
    </citation>
    <scope>NUCLEOTIDE SEQUENCE [LARGE SCALE GENOMIC DNA]</scope>
    <source>
        <strain>MRSA252</strain>
    </source>
</reference>
<dbReference type="EC" id="3.1.1.3"/>
<dbReference type="EMBL" id="BX571856">
    <property type="protein sequence ID" value="CAG41728.1"/>
    <property type="status" value="ALT_INIT"/>
    <property type="molecule type" value="Genomic_DNA"/>
</dbReference>
<dbReference type="RefSeq" id="WP_000842033.1">
    <property type="nucleotide sequence ID" value="NC_002952.2"/>
</dbReference>
<dbReference type="SMR" id="Q6GDD3"/>
<dbReference type="ESTHER" id="staau-LIP">
    <property type="family name" value="Bacterial_lip_FamI.6"/>
</dbReference>
<dbReference type="KEGG" id="sar:SAR2753"/>
<dbReference type="HOGENOM" id="CLU_023555_2_1_9"/>
<dbReference type="Proteomes" id="UP000000596">
    <property type="component" value="Chromosome"/>
</dbReference>
<dbReference type="GO" id="GO:0005576">
    <property type="term" value="C:extracellular region"/>
    <property type="evidence" value="ECO:0007669"/>
    <property type="project" value="UniProtKB-SubCell"/>
</dbReference>
<dbReference type="GO" id="GO:0046872">
    <property type="term" value="F:metal ion binding"/>
    <property type="evidence" value="ECO:0007669"/>
    <property type="project" value="UniProtKB-KW"/>
</dbReference>
<dbReference type="GO" id="GO:0004806">
    <property type="term" value="F:triacylglycerol lipase activity"/>
    <property type="evidence" value="ECO:0007669"/>
    <property type="project" value="UniProtKB-EC"/>
</dbReference>
<dbReference type="GO" id="GO:0016042">
    <property type="term" value="P:lipid catabolic process"/>
    <property type="evidence" value="ECO:0007669"/>
    <property type="project" value="UniProtKB-KW"/>
</dbReference>
<dbReference type="Gene3D" id="3.40.50.1820">
    <property type="entry name" value="alpha/beta hydrolase"/>
    <property type="match status" value="1"/>
</dbReference>
<dbReference type="InterPro" id="IPR029058">
    <property type="entry name" value="AB_hydrolase_fold"/>
</dbReference>
<dbReference type="InterPro" id="IPR056304">
    <property type="entry name" value="Lip-like_C"/>
</dbReference>
<dbReference type="InterPro" id="IPR005877">
    <property type="entry name" value="YSIRK_signal_dom"/>
</dbReference>
<dbReference type="NCBIfam" id="NF047351">
    <property type="entry name" value="lipase_YSIRK_Sa"/>
    <property type="match status" value="1"/>
</dbReference>
<dbReference type="NCBIfam" id="TIGR01168">
    <property type="entry name" value="YSIRK_signal"/>
    <property type="match status" value="1"/>
</dbReference>
<dbReference type="PANTHER" id="PTHR34043">
    <property type="entry name" value="ALPHA/BETA-HYDROLASES SUPERFAMILY PROTEIN"/>
    <property type="match status" value="1"/>
</dbReference>
<dbReference type="PANTHER" id="PTHR34043:SF3">
    <property type="entry name" value="ALPHA_BETA-HYDROLASES SUPERFAMILY PROTEIN"/>
    <property type="match status" value="1"/>
</dbReference>
<dbReference type="Pfam" id="PF24708">
    <property type="entry name" value="Lip_C"/>
    <property type="match status" value="1"/>
</dbReference>
<dbReference type="Pfam" id="PF04650">
    <property type="entry name" value="YSIRK_signal"/>
    <property type="match status" value="1"/>
</dbReference>
<dbReference type="SUPFAM" id="SSF53474">
    <property type="entry name" value="alpha/beta-Hydrolases"/>
    <property type="match status" value="1"/>
</dbReference>
<dbReference type="PROSITE" id="PS00120">
    <property type="entry name" value="LIPASE_SER"/>
    <property type="match status" value="1"/>
</dbReference>
<proteinExistence type="inferred from homology"/>
<keyword id="KW-0106">Calcium</keyword>
<keyword id="KW-0378">Hydrolase</keyword>
<keyword id="KW-0442">Lipid degradation</keyword>
<keyword id="KW-0443">Lipid metabolism</keyword>
<keyword id="KW-0479">Metal-binding</keyword>
<keyword id="KW-0964">Secreted</keyword>
<keyword id="KW-0732">Signal</keyword>
<keyword id="KW-0865">Zymogen</keyword>
<accession>Q6GDD3</accession>
<protein>
    <recommendedName>
        <fullName>Lipase 1</fullName>
        <ecNumber>3.1.1.3</ecNumber>
    </recommendedName>
    <alternativeName>
        <fullName>Glycerol ester hydrolase 1</fullName>
    </alternativeName>
</protein>
<name>LIP1_STAAR</name>
<comment type="catalytic activity">
    <reaction>
        <text>a triacylglycerol + H2O = a diacylglycerol + a fatty acid + H(+)</text>
        <dbReference type="Rhea" id="RHEA:12044"/>
        <dbReference type="ChEBI" id="CHEBI:15377"/>
        <dbReference type="ChEBI" id="CHEBI:15378"/>
        <dbReference type="ChEBI" id="CHEBI:17855"/>
        <dbReference type="ChEBI" id="CHEBI:18035"/>
        <dbReference type="ChEBI" id="CHEBI:28868"/>
        <dbReference type="EC" id="3.1.1.3"/>
    </reaction>
</comment>
<comment type="subcellular location">
    <subcellularLocation>
        <location evidence="1">Secreted</location>
    </subcellularLocation>
</comment>
<comment type="similarity">
    <text evidence="5">Belongs to the AB hydrolase superfamily. Lipase family.</text>
</comment>
<comment type="sequence caution" evidence="5">
    <conflict type="erroneous initiation">
        <sequence resource="EMBL-CDS" id="CAG41728"/>
    </conflict>
    <text>Extended N-terminus.</text>
</comment>
<feature type="signal peptide" evidence="2">
    <location>
        <begin position="1"/>
        <end position="34"/>
    </location>
</feature>
<feature type="propeptide" id="PRO_0000045180" evidence="1">
    <location>
        <begin position="35"/>
        <end position="290"/>
    </location>
</feature>
<feature type="chain" id="PRO_0000045181" description="Lipase 1">
    <location>
        <begin position="291"/>
        <end position="680"/>
    </location>
</feature>
<feature type="region of interest" description="Disordered" evidence="4">
    <location>
        <begin position="39"/>
        <end position="58"/>
    </location>
</feature>
<feature type="region of interest" description="Disordered" evidence="4">
    <location>
        <begin position="82"/>
        <end position="260"/>
    </location>
</feature>
<feature type="compositionally biased region" description="Polar residues" evidence="4">
    <location>
        <begin position="40"/>
        <end position="58"/>
    </location>
</feature>
<feature type="compositionally biased region" description="Basic and acidic residues" evidence="4">
    <location>
        <begin position="84"/>
        <end position="112"/>
    </location>
</feature>
<feature type="compositionally biased region" description="Polar residues" evidence="4">
    <location>
        <begin position="162"/>
        <end position="193"/>
    </location>
</feature>
<feature type="compositionally biased region" description="Polar residues" evidence="4">
    <location>
        <begin position="204"/>
        <end position="223"/>
    </location>
</feature>
<feature type="compositionally biased region" description="Basic and acidic residues" evidence="4">
    <location>
        <begin position="224"/>
        <end position="234"/>
    </location>
</feature>
<feature type="compositionally biased region" description="Polar residues" evidence="4">
    <location>
        <begin position="235"/>
        <end position="246"/>
    </location>
</feature>
<feature type="active site" description="Nucleophile" evidence="1">
    <location>
        <position position="408"/>
    </location>
</feature>
<feature type="active site" description="Charge relay system" evidence="3">
    <location>
        <position position="600"/>
    </location>
</feature>
<feature type="active site" description="Charge relay system" evidence="3">
    <location>
        <position position="639"/>
    </location>
</feature>
<feature type="binding site" evidence="1">
    <location>
        <position position="638"/>
    </location>
    <ligand>
        <name>Ca(2+)</name>
        <dbReference type="ChEBI" id="CHEBI:29108"/>
    </ligand>
</feature>
<feature type="binding site" evidence="1">
    <location>
        <position position="641"/>
    </location>
    <ligand>
        <name>Ca(2+)</name>
        <dbReference type="ChEBI" id="CHEBI:29108"/>
    </ligand>
</feature>
<feature type="binding site" evidence="1">
    <location>
        <position position="646"/>
    </location>
    <ligand>
        <name>Ca(2+)</name>
        <dbReference type="ChEBI" id="CHEBI:29108"/>
    </ligand>
</feature>
<feature type="binding site" evidence="1">
    <location>
        <position position="649"/>
    </location>
    <ligand>
        <name>Ca(2+)</name>
        <dbReference type="ChEBI" id="CHEBI:29108"/>
    </ligand>
</feature>